<organism>
    <name type="scientific">Streptococcus agalactiae serotype V (strain ATCC BAA-611 / 2603 V/R)</name>
    <dbReference type="NCBI Taxonomy" id="208435"/>
    <lineage>
        <taxon>Bacteria</taxon>
        <taxon>Bacillati</taxon>
        <taxon>Bacillota</taxon>
        <taxon>Bacilli</taxon>
        <taxon>Lactobacillales</taxon>
        <taxon>Streptococcaceae</taxon>
        <taxon>Streptococcus</taxon>
    </lineage>
</organism>
<evidence type="ECO:0000255" key="1">
    <source>
        <dbReference type="HAMAP-Rule" id="MF_00480"/>
    </source>
</evidence>
<evidence type="ECO:0000305" key="2"/>
<proteinExistence type="inferred from homology"/>
<gene>
    <name evidence="1" type="primary">rpsG</name>
    <name type="ordered locus">SAG1770</name>
</gene>
<dbReference type="EMBL" id="AE009948">
    <property type="protein sequence ID" value="AAN00633.1"/>
    <property type="molecule type" value="Genomic_DNA"/>
</dbReference>
<dbReference type="RefSeq" id="NP_688760.1">
    <property type="nucleotide sequence ID" value="NC_004116.1"/>
</dbReference>
<dbReference type="RefSeq" id="WP_000087842.1">
    <property type="nucleotide sequence ID" value="NC_004116.1"/>
</dbReference>
<dbReference type="SMR" id="Q8DXS6"/>
<dbReference type="STRING" id="208435.SAG1770"/>
<dbReference type="GeneID" id="66886608"/>
<dbReference type="KEGG" id="sag:SAG1770"/>
<dbReference type="PATRIC" id="fig|208435.3.peg.1776"/>
<dbReference type="HOGENOM" id="CLU_072226_1_1_9"/>
<dbReference type="OrthoDB" id="9807653at2"/>
<dbReference type="Proteomes" id="UP000000821">
    <property type="component" value="Chromosome"/>
</dbReference>
<dbReference type="GO" id="GO:0015935">
    <property type="term" value="C:small ribosomal subunit"/>
    <property type="evidence" value="ECO:0007669"/>
    <property type="project" value="InterPro"/>
</dbReference>
<dbReference type="GO" id="GO:0019843">
    <property type="term" value="F:rRNA binding"/>
    <property type="evidence" value="ECO:0007669"/>
    <property type="project" value="UniProtKB-UniRule"/>
</dbReference>
<dbReference type="GO" id="GO:0003735">
    <property type="term" value="F:structural constituent of ribosome"/>
    <property type="evidence" value="ECO:0007669"/>
    <property type="project" value="InterPro"/>
</dbReference>
<dbReference type="GO" id="GO:0000049">
    <property type="term" value="F:tRNA binding"/>
    <property type="evidence" value="ECO:0007669"/>
    <property type="project" value="UniProtKB-UniRule"/>
</dbReference>
<dbReference type="GO" id="GO:0006412">
    <property type="term" value="P:translation"/>
    <property type="evidence" value="ECO:0007669"/>
    <property type="project" value="UniProtKB-UniRule"/>
</dbReference>
<dbReference type="CDD" id="cd14869">
    <property type="entry name" value="uS7_Bacteria"/>
    <property type="match status" value="1"/>
</dbReference>
<dbReference type="FunFam" id="1.10.455.10:FF:000001">
    <property type="entry name" value="30S ribosomal protein S7"/>
    <property type="match status" value="1"/>
</dbReference>
<dbReference type="Gene3D" id="1.10.455.10">
    <property type="entry name" value="Ribosomal protein S7 domain"/>
    <property type="match status" value="1"/>
</dbReference>
<dbReference type="HAMAP" id="MF_00480_B">
    <property type="entry name" value="Ribosomal_uS7_B"/>
    <property type="match status" value="1"/>
</dbReference>
<dbReference type="InterPro" id="IPR000235">
    <property type="entry name" value="Ribosomal_uS7"/>
</dbReference>
<dbReference type="InterPro" id="IPR005717">
    <property type="entry name" value="Ribosomal_uS7_bac/org-type"/>
</dbReference>
<dbReference type="InterPro" id="IPR020606">
    <property type="entry name" value="Ribosomal_uS7_CS"/>
</dbReference>
<dbReference type="InterPro" id="IPR023798">
    <property type="entry name" value="Ribosomal_uS7_dom"/>
</dbReference>
<dbReference type="InterPro" id="IPR036823">
    <property type="entry name" value="Ribosomal_uS7_dom_sf"/>
</dbReference>
<dbReference type="NCBIfam" id="TIGR01029">
    <property type="entry name" value="rpsG_bact"/>
    <property type="match status" value="1"/>
</dbReference>
<dbReference type="PANTHER" id="PTHR11205">
    <property type="entry name" value="RIBOSOMAL PROTEIN S7"/>
    <property type="match status" value="1"/>
</dbReference>
<dbReference type="Pfam" id="PF00177">
    <property type="entry name" value="Ribosomal_S7"/>
    <property type="match status" value="1"/>
</dbReference>
<dbReference type="PIRSF" id="PIRSF002122">
    <property type="entry name" value="RPS7p_RPS7a_RPS5e_RPS7o"/>
    <property type="match status" value="1"/>
</dbReference>
<dbReference type="SUPFAM" id="SSF47973">
    <property type="entry name" value="Ribosomal protein S7"/>
    <property type="match status" value="1"/>
</dbReference>
<dbReference type="PROSITE" id="PS00052">
    <property type="entry name" value="RIBOSOMAL_S7"/>
    <property type="match status" value="1"/>
</dbReference>
<keyword id="KW-1185">Reference proteome</keyword>
<keyword id="KW-0687">Ribonucleoprotein</keyword>
<keyword id="KW-0689">Ribosomal protein</keyword>
<keyword id="KW-0694">RNA-binding</keyword>
<keyword id="KW-0699">rRNA-binding</keyword>
<keyword id="KW-0820">tRNA-binding</keyword>
<sequence length="156" mass="17695">MSRKNQAPKREVLPDPLYNSKIVTRLINRVMLDGKRGTAATIVYDAFEAIKEATGTDALEVFETAMENIMPVLEVRARRVGGSNYQVPVEVRPERRTTLGLRWLVNASRARGEHTMKDRLAKEIMDAANNTGASVKKREDTHKMAEANRAFAHFRW</sequence>
<accession>Q8DXS6</accession>
<protein>
    <recommendedName>
        <fullName evidence="1">Small ribosomal subunit protein uS7</fullName>
    </recommendedName>
    <alternativeName>
        <fullName evidence="2">30S ribosomal protein S7</fullName>
    </alternativeName>
</protein>
<feature type="chain" id="PRO_0000124351" description="Small ribosomal subunit protein uS7">
    <location>
        <begin position="1"/>
        <end position="156"/>
    </location>
</feature>
<name>RS7_STRA5</name>
<comment type="function">
    <text evidence="1">One of the primary rRNA binding proteins, it binds directly to 16S rRNA where it nucleates assembly of the head domain of the 30S subunit. Is located at the subunit interface close to the decoding center, probably blocks exit of the E-site tRNA.</text>
</comment>
<comment type="subunit">
    <text evidence="1">Part of the 30S ribosomal subunit. Contacts proteins S9 and S11.</text>
</comment>
<comment type="similarity">
    <text evidence="1">Belongs to the universal ribosomal protein uS7 family.</text>
</comment>
<reference key="1">
    <citation type="journal article" date="2002" name="Proc. Natl. Acad. Sci. U.S.A.">
        <title>Complete genome sequence and comparative genomic analysis of an emerging human pathogen, serotype V Streptococcus agalactiae.</title>
        <authorList>
            <person name="Tettelin H."/>
            <person name="Masignani V."/>
            <person name="Cieslewicz M.J."/>
            <person name="Eisen J.A."/>
            <person name="Peterson S.N."/>
            <person name="Wessels M.R."/>
            <person name="Paulsen I.T."/>
            <person name="Nelson K.E."/>
            <person name="Margarit I."/>
            <person name="Read T.D."/>
            <person name="Madoff L.C."/>
            <person name="Wolf A.M."/>
            <person name="Beanan M.J."/>
            <person name="Brinkac L.M."/>
            <person name="Daugherty S.C."/>
            <person name="DeBoy R.T."/>
            <person name="Durkin A.S."/>
            <person name="Kolonay J.F."/>
            <person name="Madupu R."/>
            <person name="Lewis M.R."/>
            <person name="Radune D."/>
            <person name="Fedorova N.B."/>
            <person name="Scanlan D."/>
            <person name="Khouri H.M."/>
            <person name="Mulligan S."/>
            <person name="Carty H.A."/>
            <person name="Cline R.T."/>
            <person name="Van Aken S.E."/>
            <person name="Gill J."/>
            <person name="Scarselli M."/>
            <person name="Mora M."/>
            <person name="Iacobini E.T."/>
            <person name="Brettoni C."/>
            <person name="Galli G."/>
            <person name="Mariani M."/>
            <person name="Vegni F."/>
            <person name="Maione D."/>
            <person name="Rinaudo D."/>
            <person name="Rappuoli R."/>
            <person name="Telford J.L."/>
            <person name="Kasper D.L."/>
            <person name="Grandi G."/>
            <person name="Fraser C.M."/>
        </authorList>
    </citation>
    <scope>NUCLEOTIDE SEQUENCE [LARGE SCALE GENOMIC DNA]</scope>
    <source>
        <strain>ATCC BAA-611 / 2603 V/R</strain>
    </source>
</reference>